<evidence type="ECO:0000250" key="1"/>
<evidence type="ECO:0000255" key="2">
    <source>
        <dbReference type="PROSITE-ProRule" id="PRU00690"/>
    </source>
</evidence>
<evidence type="ECO:0000256" key="3">
    <source>
        <dbReference type="SAM" id="MobiDB-lite"/>
    </source>
</evidence>
<evidence type="ECO:0000305" key="4"/>
<proteinExistence type="inferred from homology"/>
<gene>
    <name type="primary">nop58</name>
    <name type="ORF">ACLA_041100</name>
</gene>
<dbReference type="EMBL" id="DS027056">
    <property type="protein sequence ID" value="EAW09894.1"/>
    <property type="molecule type" value="Genomic_DNA"/>
</dbReference>
<dbReference type="RefSeq" id="XP_001271320.1">
    <property type="nucleotide sequence ID" value="XM_001271319.1"/>
</dbReference>
<dbReference type="SMR" id="A1CL70"/>
<dbReference type="STRING" id="344612.A1CL70"/>
<dbReference type="EnsemblFungi" id="EAW09894">
    <property type="protein sequence ID" value="EAW09894"/>
    <property type="gene ID" value="ACLA_041100"/>
</dbReference>
<dbReference type="GeneID" id="4702875"/>
<dbReference type="KEGG" id="act:ACLA_041100"/>
<dbReference type="VEuPathDB" id="FungiDB:ACLA_041100"/>
<dbReference type="eggNOG" id="KOG2572">
    <property type="taxonomic scope" value="Eukaryota"/>
</dbReference>
<dbReference type="HOGENOM" id="CLU_015495_5_0_1"/>
<dbReference type="OMA" id="MGMRSNW"/>
<dbReference type="OrthoDB" id="6780543at2759"/>
<dbReference type="Proteomes" id="UP000006701">
    <property type="component" value="Unassembled WGS sequence"/>
</dbReference>
<dbReference type="GO" id="GO:0031428">
    <property type="term" value="C:box C/D methylation guide snoRNP complex"/>
    <property type="evidence" value="ECO:0007669"/>
    <property type="project" value="EnsemblFungi"/>
</dbReference>
<dbReference type="GO" id="GO:0005730">
    <property type="term" value="C:nucleolus"/>
    <property type="evidence" value="ECO:0007669"/>
    <property type="project" value="UniProtKB-SubCell"/>
</dbReference>
<dbReference type="GO" id="GO:0032040">
    <property type="term" value="C:small-subunit processome"/>
    <property type="evidence" value="ECO:0007669"/>
    <property type="project" value="EnsemblFungi"/>
</dbReference>
<dbReference type="GO" id="GO:0030515">
    <property type="term" value="F:snoRNA binding"/>
    <property type="evidence" value="ECO:0007669"/>
    <property type="project" value="InterPro"/>
</dbReference>
<dbReference type="GO" id="GO:0017069">
    <property type="term" value="F:snRNA binding"/>
    <property type="evidence" value="ECO:0007669"/>
    <property type="project" value="EnsemblFungi"/>
</dbReference>
<dbReference type="GO" id="GO:0000494">
    <property type="term" value="P:box C/D sno(s)RNA 3'-end processing"/>
    <property type="evidence" value="ECO:0007669"/>
    <property type="project" value="EnsemblFungi"/>
</dbReference>
<dbReference type="GO" id="GO:0000480">
    <property type="term" value="P:endonucleolytic cleavage in 5'-ETS of tricistronic rRNA transcript (SSU-rRNA, 5.8S rRNA, LSU-rRNA)"/>
    <property type="evidence" value="ECO:0007669"/>
    <property type="project" value="EnsemblFungi"/>
</dbReference>
<dbReference type="GO" id="GO:0000447">
    <property type="term" value="P:endonucleolytic cleavage in ITS1 to separate SSU-rRNA from 5.8S rRNA and LSU-rRNA from tricistronic rRNA transcript (SSU-rRNA, 5.8S rRNA, LSU-rRNA)"/>
    <property type="evidence" value="ECO:0007669"/>
    <property type="project" value="EnsemblFungi"/>
</dbReference>
<dbReference type="GO" id="GO:0000472">
    <property type="term" value="P:endonucleolytic cleavage to generate mature 5'-end of SSU-rRNA from (SSU-rRNA, 5.8S rRNA, LSU-rRNA)"/>
    <property type="evidence" value="ECO:0007669"/>
    <property type="project" value="EnsemblFungi"/>
</dbReference>
<dbReference type="GO" id="GO:1902570">
    <property type="term" value="P:protein localization to nucleolus"/>
    <property type="evidence" value="ECO:0007669"/>
    <property type="project" value="EnsemblFungi"/>
</dbReference>
<dbReference type="GO" id="GO:0000452">
    <property type="term" value="P:snoRNA guided rRNA 2'-O-methylation"/>
    <property type="evidence" value="ECO:0007669"/>
    <property type="project" value="EnsemblFungi"/>
</dbReference>
<dbReference type="FunFam" id="1.10.246.90:FF:000003">
    <property type="entry name" value="Nucleolar protein 58"/>
    <property type="match status" value="1"/>
</dbReference>
<dbReference type="FunFam" id="1.10.287.4070:FF:000001">
    <property type="entry name" value="Probable Nucleolar protein 58"/>
    <property type="match status" value="1"/>
</dbReference>
<dbReference type="Gene3D" id="1.10.287.4070">
    <property type="match status" value="1"/>
</dbReference>
<dbReference type="Gene3D" id="1.10.246.90">
    <property type="entry name" value="Nop domain"/>
    <property type="match status" value="1"/>
</dbReference>
<dbReference type="InterPro" id="IPR045056">
    <property type="entry name" value="Nop56/Nop58"/>
</dbReference>
<dbReference type="InterPro" id="IPR012974">
    <property type="entry name" value="NOP58/56_N"/>
</dbReference>
<dbReference type="InterPro" id="IPR042239">
    <property type="entry name" value="Nop_C"/>
</dbReference>
<dbReference type="InterPro" id="IPR002687">
    <property type="entry name" value="Nop_dom"/>
</dbReference>
<dbReference type="InterPro" id="IPR036070">
    <property type="entry name" value="Nop_dom_sf"/>
</dbReference>
<dbReference type="InterPro" id="IPR012976">
    <property type="entry name" value="NOSIC"/>
</dbReference>
<dbReference type="PANTHER" id="PTHR10894">
    <property type="entry name" value="NUCLEOLAR PROTEIN 5 NUCLEOLAR PROTEIN NOP5 NOP58"/>
    <property type="match status" value="1"/>
</dbReference>
<dbReference type="PANTHER" id="PTHR10894:SF1">
    <property type="entry name" value="NUCLEOLAR PROTEIN 58"/>
    <property type="match status" value="1"/>
</dbReference>
<dbReference type="Pfam" id="PF01798">
    <property type="entry name" value="Nop"/>
    <property type="match status" value="1"/>
</dbReference>
<dbReference type="Pfam" id="PF08156">
    <property type="entry name" value="NOP5NT"/>
    <property type="match status" value="1"/>
</dbReference>
<dbReference type="SMART" id="SM00931">
    <property type="entry name" value="NOSIC"/>
    <property type="match status" value="1"/>
</dbReference>
<dbReference type="SUPFAM" id="SSF89124">
    <property type="entry name" value="Nop domain"/>
    <property type="match status" value="1"/>
</dbReference>
<dbReference type="PROSITE" id="PS51358">
    <property type="entry name" value="NOP"/>
    <property type="match status" value="1"/>
</dbReference>
<keyword id="KW-0539">Nucleus</keyword>
<keyword id="KW-1185">Reference proteome</keyword>
<keyword id="KW-0687">Ribonucleoprotein</keyword>
<keyword id="KW-0690">Ribosome biogenesis</keyword>
<keyword id="KW-0698">rRNA processing</keyword>
<protein>
    <recommendedName>
        <fullName>Nucleolar protein 58</fullName>
    </recommendedName>
</protein>
<feature type="chain" id="PRO_0000350973" description="Nucleolar protein 58">
    <location>
        <begin position="1"/>
        <end position="592"/>
    </location>
</feature>
<feature type="domain" description="Nop" evidence="2">
    <location>
        <begin position="285"/>
        <end position="410"/>
    </location>
</feature>
<feature type="region of interest" description="Disordered" evidence="3">
    <location>
        <begin position="443"/>
        <end position="592"/>
    </location>
</feature>
<feature type="compositionally biased region" description="Basic and acidic residues" evidence="3">
    <location>
        <begin position="450"/>
        <end position="462"/>
    </location>
</feature>
<feature type="compositionally biased region" description="Acidic residues" evidence="3">
    <location>
        <begin position="463"/>
        <end position="478"/>
    </location>
</feature>
<feature type="compositionally biased region" description="Basic and acidic residues" evidence="3">
    <location>
        <begin position="505"/>
        <end position="515"/>
    </location>
</feature>
<feature type="compositionally biased region" description="Basic and acidic residues" evidence="3">
    <location>
        <begin position="557"/>
        <end position="571"/>
    </location>
</feature>
<feature type="compositionally biased region" description="Basic residues" evidence="3">
    <location>
        <begin position="582"/>
        <end position="592"/>
    </location>
</feature>
<name>NOP58_ASPCL</name>
<sequence>MTLFILTETSAGYALLKAKDKKLLKRDDLATEAATAEGVSNLVKLKSFQKFDSAAAALEEVASLVEGKVTPRLASLLDEIKDEKKVSLAVADPKLGNAIGKLPGLDIQLIADSTTADIYRAIREHLPTLIPGLLPQDMSTMSLGLSHSLARHKLKFSPDKIDTMIVQAIGLLDDLDKELNTYAMRVKEWYGWHFPELAKILNDNIAYARLVLKMGMRSNWETSDLAEILPEELEGPVKAAADRSMGTEISQDDLENIQALAEQVVGFAEYRQQLAGYLTARMNAIAPNLTALVGDLVGARLIAHAGSLTNLSKSPASTIQILGAEKALFRALKTKHDTPKYGLIYHASLIGQATGKNKGKMARVLAAKASLGIRVDALADWEDDATEEDKAALGTEARYNLERKLAAMEGKPLKPRGVAIAPNGASAQPKKFELNEARKYNADADALSSDEPKSKKDKKLIEEVSDEEMADADSDEEPAANGTKDDDSSDDSEEEKSKKHKSKKGKDAELEKLAERAGLSLKRYKRKLERGEITFDADGNPTAVSKKDLKKAKKEAKKASKGDEKKRKRSDDGEEVDNAEKKQKKKKKKGEE</sequence>
<organism>
    <name type="scientific">Aspergillus clavatus (strain ATCC 1007 / CBS 513.65 / DSM 816 / NCTC 3887 / NRRL 1 / QM 1276 / 107)</name>
    <dbReference type="NCBI Taxonomy" id="344612"/>
    <lineage>
        <taxon>Eukaryota</taxon>
        <taxon>Fungi</taxon>
        <taxon>Dikarya</taxon>
        <taxon>Ascomycota</taxon>
        <taxon>Pezizomycotina</taxon>
        <taxon>Eurotiomycetes</taxon>
        <taxon>Eurotiomycetidae</taxon>
        <taxon>Eurotiales</taxon>
        <taxon>Aspergillaceae</taxon>
        <taxon>Aspergillus</taxon>
        <taxon>Aspergillus subgen. Fumigati</taxon>
    </lineage>
</organism>
<comment type="function">
    <text evidence="1">Required for pre-18S rRNA processing. May bind microtubules (By similarity).</text>
</comment>
<comment type="subcellular location">
    <subcellularLocation>
        <location evidence="1">Nucleus</location>
        <location evidence="1">Nucleolus</location>
    </subcellularLocation>
</comment>
<comment type="similarity">
    <text evidence="4">Belongs to the NOP5/NOP56 family.</text>
</comment>
<accession>A1CL70</accession>
<reference key="1">
    <citation type="journal article" date="2008" name="PLoS Genet.">
        <title>Genomic islands in the pathogenic filamentous fungus Aspergillus fumigatus.</title>
        <authorList>
            <person name="Fedorova N.D."/>
            <person name="Khaldi N."/>
            <person name="Joardar V.S."/>
            <person name="Maiti R."/>
            <person name="Amedeo P."/>
            <person name="Anderson M.J."/>
            <person name="Crabtree J."/>
            <person name="Silva J.C."/>
            <person name="Badger J.H."/>
            <person name="Albarraq A."/>
            <person name="Angiuoli S."/>
            <person name="Bussey H."/>
            <person name="Bowyer P."/>
            <person name="Cotty P.J."/>
            <person name="Dyer P.S."/>
            <person name="Egan A."/>
            <person name="Galens K."/>
            <person name="Fraser-Liggett C.M."/>
            <person name="Haas B.J."/>
            <person name="Inman J.M."/>
            <person name="Kent R."/>
            <person name="Lemieux S."/>
            <person name="Malavazi I."/>
            <person name="Orvis J."/>
            <person name="Roemer T."/>
            <person name="Ronning C.M."/>
            <person name="Sundaram J.P."/>
            <person name="Sutton G."/>
            <person name="Turner G."/>
            <person name="Venter J.C."/>
            <person name="White O.R."/>
            <person name="Whitty B.R."/>
            <person name="Youngman P."/>
            <person name="Wolfe K.H."/>
            <person name="Goldman G.H."/>
            <person name="Wortman J.R."/>
            <person name="Jiang B."/>
            <person name="Denning D.W."/>
            <person name="Nierman W.C."/>
        </authorList>
    </citation>
    <scope>NUCLEOTIDE SEQUENCE [LARGE SCALE GENOMIC DNA]</scope>
    <source>
        <strain>ATCC 1007 / CBS 513.65 / DSM 816 / NCTC 3887 / NRRL 1 / QM 1276 / 107</strain>
    </source>
</reference>